<evidence type="ECO:0000255" key="1">
    <source>
        <dbReference type="HAMAP-Rule" id="MF_01401"/>
    </source>
</evidence>
<comment type="function">
    <text evidence="1">Has an important function as a repair enzyme for proteins that have been inactivated by oxidation. Catalyzes the reversible oxidation-reduction of methionine sulfoxide in proteins to methionine.</text>
</comment>
<comment type="catalytic activity">
    <reaction evidence="1">
        <text>L-methionyl-[protein] + [thioredoxin]-disulfide + H2O = L-methionyl-(S)-S-oxide-[protein] + [thioredoxin]-dithiol</text>
        <dbReference type="Rhea" id="RHEA:14217"/>
        <dbReference type="Rhea" id="RHEA-COMP:10698"/>
        <dbReference type="Rhea" id="RHEA-COMP:10700"/>
        <dbReference type="Rhea" id="RHEA-COMP:12313"/>
        <dbReference type="Rhea" id="RHEA-COMP:12315"/>
        <dbReference type="ChEBI" id="CHEBI:15377"/>
        <dbReference type="ChEBI" id="CHEBI:16044"/>
        <dbReference type="ChEBI" id="CHEBI:29950"/>
        <dbReference type="ChEBI" id="CHEBI:44120"/>
        <dbReference type="ChEBI" id="CHEBI:50058"/>
        <dbReference type="EC" id="1.8.4.11"/>
    </reaction>
</comment>
<comment type="catalytic activity">
    <reaction evidence="1">
        <text>[thioredoxin]-disulfide + L-methionine + H2O = L-methionine (S)-S-oxide + [thioredoxin]-dithiol</text>
        <dbReference type="Rhea" id="RHEA:19993"/>
        <dbReference type="Rhea" id="RHEA-COMP:10698"/>
        <dbReference type="Rhea" id="RHEA-COMP:10700"/>
        <dbReference type="ChEBI" id="CHEBI:15377"/>
        <dbReference type="ChEBI" id="CHEBI:29950"/>
        <dbReference type="ChEBI" id="CHEBI:50058"/>
        <dbReference type="ChEBI" id="CHEBI:57844"/>
        <dbReference type="ChEBI" id="CHEBI:58772"/>
        <dbReference type="EC" id="1.8.4.11"/>
    </reaction>
</comment>
<comment type="similarity">
    <text evidence="1">Belongs to the MsrA Met sulfoxide reductase family.</text>
</comment>
<dbReference type="EC" id="1.8.4.11" evidence="1"/>
<dbReference type="EMBL" id="AF404824">
    <property type="protein sequence ID" value="AAL59600.1"/>
    <property type="molecule type" value="Genomic_DNA"/>
</dbReference>
<dbReference type="RefSeq" id="WP_039567714.1">
    <property type="nucleotide sequence ID" value="NZ_OCZD01000086.1"/>
</dbReference>
<dbReference type="SMR" id="Q8VS50"/>
<dbReference type="eggNOG" id="COG0225">
    <property type="taxonomic scope" value="Bacteria"/>
</dbReference>
<dbReference type="BRENDA" id="1.8.4.11">
    <property type="organism ID" value="6708"/>
</dbReference>
<dbReference type="GO" id="GO:0005737">
    <property type="term" value="C:cytoplasm"/>
    <property type="evidence" value="ECO:0007669"/>
    <property type="project" value="TreeGrafter"/>
</dbReference>
<dbReference type="GO" id="GO:0036456">
    <property type="term" value="F:L-methionine-(S)-S-oxide reductase activity"/>
    <property type="evidence" value="ECO:0007669"/>
    <property type="project" value="TreeGrafter"/>
</dbReference>
<dbReference type="GO" id="GO:0008113">
    <property type="term" value="F:peptide-methionine (S)-S-oxide reductase activity"/>
    <property type="evidence" value="ECO:0007669"/>
    <property type="project" value="UniProtKB-UniRule"/>
</dbReference>
<dbReference type="GO" id="GO:0034599">
    <property type="term" value="P:cellular response to oxidative stress"/>
    <property type="evidence" value="ECO:0007669"/>
    <property type="project" value="TreeGrafter"/>
</dbReference>
<dbReference type="GO" id="GO:0036211">
    <property type="term" value="P:protein modification process"/>
    <property type="evidence" value="ECO:0007669"/>
    <property type="project" value="UniProtKB-UniRule"/>
</dbReference>
<dbReference type="FunFam" id="3.30.1060.10:FF:000001">
    <property type="entry name" value="Peptide methionine sulfoxide reductase MsrA"/>
    <property type="match status" value="1"/>
</dbReference>
<dbReference type="Gene3D" id="3.30.1060.10">
    <property type="entry name" value="Peptide methionine sulphoxide reductase MsrA"/>
    <property type="match status" value="1"/>
</dbReference>
<dbReference type="HAMAP" id="MF_01401">
    <property type="entry name" value="MsrA"/>
    <property type="match status" value="1"/>
</dbReference>
<dbReference type="InterPro" id="IPR002569">
    <property type="entry name" value="Met_Sox_Rdtase_MsrA_dom"/>
</dbReference>
<dbReference type="InterPro" id="IPR036509">
    <property type="entry name" value="Met_Sox_Rdtase_MsrA_sf"/>
</dbReference>
<dbReference type="InterPro" id="IPR050162">
    <property type="entry name" value="MsrA_MetSO_reductase"/>
</dbReference>
<dbReference type="NCBIfam" id="TIGR00401">
    <property type="entry name" value="msrA"/>
    <property type="match status" value="1"/>
</dbReference>
<dbReference type="PANTHER" id="PTHR42799">
    <property type="entry name" value="MITOCHONDRIAL PEPTIDE METHIONINE SULFOXIDE REDUCTASE"/>
    <property type="match status" value="1"/>
</dbReference>
<dbReference type="PANTHER" id="PTHR42799:SF2">
    <property type="entry name" value="MITOCHONDRIAL PEPTIDE METHIONINE SULFOXIDE REDUCTASE"/>
    <property type="match status" value="1"/>
</dbReference>
<dbReference type="Pfam" id="PF01625">
    <property type="entry name" value="PMSR"/>
    <property type="match status" value="1"/>
</dbReference>
<dbReference type="SUPFAM" id="SSF55068">
    <property type="entry name" value="Peptide methionine sulfoxide reductase"/>
    <property type="match status" value="1"/>
</dbReference>
<accession>Q8VS50</accession>
<sequence>MLGIGAFKQRMPRPGEALPGREQALPLHNTHLVNGHPLRGEFTGLAQVQFGLGCFWGAERKFWNVPGVYTTAVGYAGGQTPNATYSEVCSGQTGHTEAVLVVFDEQAVSFAQLLRTFWESHDPTQGMQQGNDVGTQYRSAIYCTTQAQYDAALASRDAYQQQLTASGYGDITTEIRFPAPTFYYAEDDHQQYLAKHPNGYCGLGGTGVSCPIGLDA</sequence>
<feature type="chain" id="PRO_0000138611" description="Peptide methionine sulfoxide reductase MsrA">
    <location>
        <begin position="1"/>
        <end position="216"/>
    </location>
</feature>
<feature type="active site" evidence="1">
    <location>
        <position position="54"/>
    </location>
</feature>
<proteinExistence type="inferred from homology"/>
<keyword id="KW-0560">Oxidoreductase</keyword>
<gene>
    <name evidence="1" type="primary">msrA</name>
</gene>
<organism>
    <name type="scientific">Xanthomonas campestris pv. phaseoli</name>
    <dbReference type="NCBI Taxonomy" id="317013"/>
    <lineage>
        <taxon>Bacteria</taxon>
        <taxon>Pseudomonadati</taxon>
        <taxon>Pseudomonadota</taxon>
        <taxon>Gammaproteobacteria</taxon>
        <taxon>Lysobacterales</taxon>
        <taxon>Lysobacteraceae</taxon>
        <taxon>Xanthomonas</taxon>
    </lineage>
</organism>
<name>MSRA_XANCH</name>
<reference key="1">
    <citation type="submission" date="2001-08" db="EMBL/GenBank/DDBJ databases">
        <title>Cloning and characterization of Xanthomonas peptide methionine sulfoxide reductase.</title>
        <authorList>
            <person name="Mongkolsuk S."/>
            <person name="Seeanukun C."/>
            <person name="Vattanaviboon P."/>
        </authorList>
    </citation>
    <scope>NUCLEOTIDE SEQUENCE [GENOMIC DNA]</scope>
</reference>
<protein>
    <recommendedName>
        <fullName evidence="1">Peptide methionine sulfoxide reductase MsrA</fullName>
        <shortName evidence="1">Protein-methionine-S-oxide reductase</shortName>
        <ecNumber evidence="1">1.8.4.11</ecNumber>
    </recommendedName>
    <alternativeName>
        <fullName evidence="1">Peptide-methionine (S)-S-oxide reductase</fullName>
        <shortName evidence="1">Peptide Met(O) reductase</shortName>
    </alternativeName>
</protein>